<organismHost>
    <name type="scientific">Homo sapiens</name>
    <name type="common">Human</name>
    <dbReference type="NCBI Taxonomy" id="9606"/>
</organismHost>
<name>GLYC_HRSV6</name>
<gene>
    <name type="primary">G</name>
</gene>
<organism>
    <name type="scientific">Human respiratory syncytial virus A (strain rsb6256)</name>
    <dbReference type="NCBI Taxonomy" id="11256"/>
    <lineage>
        <taxon>Viruses</taxon>
        <taxon>Riboviria</taxon>
        <taxon>Orthornavirae</taxon>
        <taxon>Negarnaviricota</taxon>
        <taxon>Haploviricotina</taxon>
        <taxon>Monjiviricetes</taxon>
        <taxon>Mononegavirales</taxon>
        <taxon>Pneumoviridae</taxon>
        <taxon>Orthopneumovirus</taxon>
        <taxon>Orthopneumovirus hominis</taxon>
    </lineage>
</organism>
<reference key="1">
    <citation type="journal article" date="1991" name="J. Gen. Virol.">
        <title>Identification of variable domains of the attachment (G) protein of subgroup A respiratory syncytial viruses.</title>
        <authorList>
            <person name="Cane P.A."/>
            <person name="Matthews D.A."/>
            <person name="Pringle C.R."/>
        </authorList>
    </citation>
    <scope>NUCLEOTIDE SEQUENCE</scope>
</reference>
<protein>
    <recommendedName>
        <fullName>Major surface glycoprotein G</fullName>
    </recommendedName>
    <alternativeName>
        <fullName>Attachment glycoprotein G</fullName>
    </alternativeName>
    <alternativeName>
        <fullName>Membrane-bound glycoprotein</fullName>
        <shortName>mG</shortName>
    </alternativeName>
    <component>
        <recommendedName>
            <fullName evidence="2">Mature secreted glycoprotein G</fullName>
            <shortName evidence="2">Mature sG</shortName>
        </recommendedName>
    </component>
</protein>
<evidence type="ECO:0000250" key="1">
    <source>
        <dbReference type="UniProtKB" id="P03423"/>
    </source>
</evidence>
<evidence type="ECO:0000250" key="2">
    <source>
        <dbReference type="UniProtKB" id="P20895"/>
    </source>
</evidence>
<evidence type="ECO:0000255" key="3"/>
<evidence type="ECO:0000256" key="4">
    <source>
        <dbReference type="SAM" id="MobiDB-lite"/>
    </source>
</evidence>
<evidence type="ECO:0000305" key="5"/>
<evidence type="ECO:0007829" key="6">
    <source>
        <dbReference type="PDB" id="6BLH"/>
    </source>
</evidence>
<feature type="chain" id="PRO_0000142862" description="Major surface glycoprotein G">
    <location>
        <begin position="1"/>
        <end position="297"/>
    </location>
</feature>
<feature type="chain" id="PRO_0000451331" description="Mature secreted glycoprotein G">
    <location>
        <begin position="66"/>
        <end position="297"/>
    </location>
</feature>
<feature type="topological domain" description="Cytoplasmic" evidence="3">
    <location>
        <begin position="1"/>
        <end position="37"/>
    </location>
</feature>
<feature type="transmembrane region" description="Helical" evidence="3">
    <location>
        <begin position="38"/>
        <end position="66"/>
    </location>
</feature>
<feature type="topological domain" description="Extracellular" evidence="3">
    <location>
        <begin position="67"/>
        <end position="297"/>
    </location>
</feature>
<feature type="region of interest" description="Disordered" evidence="4">
    <location>
        <begin position="101"/>
        <end position="161"/>
    </location>
</feature>
<feature type="region of interest" description="Binding to host heparan sulfate" evidence="1">
    <location>
        <begin position="187"/>
        <end position="198"/>
    </location>
</feature>
<feature type="region of interest" description="Disordered" evidence="4">
    <location>
        <begin position="190"/>
        <end position="297"/>
    </location>
</feature>
<feature type="compositionally biased region" description="Low complexity" evidence="4">
    <location>
        <begin position="105"/>
        <end position="139"/>
    </location>
</feature>
<feature type="compositionally biased region" description="Polar residues" evidence="4">
    <location>
        <begin position="140"/>
        <end position="150"/>
    </location>
</feature>
<feature type="compositionally biased region" description="Basic residues" evidence="4">
    <location>
        <begin position="190"/>
        <end position="207"/>
    </location>
</feature>
<feature type="compositionally biased region" description="Basic and acidic residues" evidence="4">
    <location>
        <begin position="211"/>
        <end position="232"/>
    </location>
</feature>
<feature type="compositionally biased region" description="Low complexity" evidence="4">
    <location>
        <begin position="235"/>
        <end position="253"/>
    </location>
</feature>
<feature type="compositionally biased region" description="Polar residues" evidence="4">
    <location>
        <begin position="254"/>
        <end position="285"/>
    </location>
</feature>
<feature type="compositionally biased region" description="Pro residues" evidence="4">
    <location>
        <begin position="287"/>
        <end position="297"/>
    </location>
</feature>
<feature type="site" description="Cleavage" evidence="1">
    <location>
        <begin position="65"/>
        <end position="66"/>
    </location>
</feature>
<feature type="glycosylation site" description="O-linked (GalNAc...) threonine; by host" evidence="1">
    <location>
        <position position="70"/>
    </location>
</feature>
<feature type="glycosylation site" description="O-linked (GalNAc...) threonine; by host" evidence="1">
    <location>
        <position position="72"/>
    </location>
</feature>
<feature type="glycosylation site" description="O-linked (GalNAc...) threonine; by host" evidence="1">
    <location>
        <position position="80"/>
    </location>
</feature>
<feature type="glycosylation site" description="O-linked (GalNAc...) threonine; by host" evidence="1">
    <location>
        <position position="86"/>
    </location>
</feature>
<feature type="glycosylation site" description="O-linked (GalNAc...) threonine; by host" evidence="1">
    <location>
        <position position="87"/>
    </location>
</feature>
<feature type="glycosylation site" description="O-linked (GalNAc...) threonine; by host" evidence="1">
    <location>
        <position position="92"/>
    </location>
</feature>
<feature type="glycosylation site" description="O-linked (GalNAc...) serine; by host" evidence="3">
    <location>
        <position position="100"/>
    </location>
</feature>
<feature type="glycosylation site" description="N-linked (GlcNAc...) asparagine; by host" evidence="3">
    <location>
        <position position="103"/>
    </location>
</feature>
<feature type="glycosylation site" description="O-linked (GalNAc...) serine; by host" evidence="3">
    <location>
        <position position="105"/>
    </location>
</feature>
<feature type="glycosylation site" description="O-linked (GalNAc...) threonine; by host" evidence="3">
    <location>
        <position position="113"/>
    </location>
</feature>
<feature type="glycosylation site" description="O-linked (GalNAc...) threonine; by host" evidence="3">
    <location>
        <position position="119"/>
    </location>
</feature>
<feature type="glycosylation site" description="N-linked (GlcNAc...) asparagine; by host" evidence="3">
    <location>
        <position position="135"/>
    </location>
</feature>
<feature type="glycosylation site" description="O-linked (GalNAc...) threonine; by host" evidence="3">
    <location>
        <position position="137"/>
    </location>
</feature>
<feature type="glycosylation site" description="O-linked (GalNAc...) threonine; by host" evidence="3">
    <location>
        <position position="138"/>
    </location>
</feature>
<feature type="glycosylation site" description="O-linked (GalNAc...) threonine; by host" evidence="3">
    <location>
        <position position="139"/>
    </location>
</feature>
<feature type="glycosylation site" description="O-linked (GalNAc...) serine; by host" evidence="3">
    <location>
        <position position="144"/>
    </location>
</feature>
<feature type="glycosylation site" description="O-linked (GalNAc...) threonine; by host" evidence="3">
    <location>
        <position position="147"/>
    </location>
</feature>
<feature type="glycosylation site" description="O-linked (GalNAc...) threonine; by host" evidence="3">
    <location>
        <position position="199"/>
    </location>
</feature>
<feature type="glycosylation site" description="O-linked (GalNAc...) threonine; by host" evidence="3">
    <location>
        <position position="203"/>
    </location>
</feature>
<feature type="glycosylation site" description="O-linked (GalNAc...) threonine; by host" evidence="3">
    <location>
        <position position="219"/>
    </location>
</feature>
<feature type="glycosylation site" description="O-linked (GalNAc...) threonine; by host" evidence="3">
    <location>
        <position position="231"/>
    </location>
</feature>
<feature type="glycosylation site" description="O-linked (GalNAc...) threonine; by host" evidence="3">
    <location>
        <position position="235"/>
    </location>
</feature>
<feature type="glycosylation site" description="N-linked (GlcNAc...) asparagine; by host" evidence="3">
    <location>
        <position position="237"/>
    </location>
</feature>
<feature type="glycosylation site" description="N-linked (GlcNAc...) asparagine; by host" evidence="3">
    <location>
        <position position="251"/>
    </location>
</feature>
<feature type="glycosylation site" description="O-linked (GalNAc...) threonine; by host" evidence="3">
    <location>
        <position position="253"/>
    </location>
</feature>
<feature type="glycosylation site" description="O-linked (GalNAc...) serine; by host" evidence="3">
    <location>
        <position position="269"/>
    </location>
</feature>
<feature type="glycosylation site" description="O-linked (GalNAc...) serine; by host" evidence="3">
    <location>
        <position position="275"/>
    </location>
</feature>
<feature type="glycosylation site" description="O-linked (GalNAc...) threonine; by host" evidence="3">
    <location>
        <position position="282"/>
    </location>
</feature>
<feature type="glycosylation site" description="O-linked (GalNAc...) serine; by host" evidence="3">
    <location>
        <position position="283"/>
    </location>
</feature>
<feature type="glycosylation site" description="O-linked (GalNAc...) serine; by host" evidence="3">
    <location>
        <position position="287"/>
    </location>
</feature>
<feature type="glycosylation site" description="N-linked (GlcNAc...) asparagine; by host" evidence="3">
    <location>
        <position position="294"/>
    </location>
</feature>
<feature type="disulfide bond" evidence="1">
    <location>
        <begin position="173"/>
        <end position="186"/>
    </location>
</feature>
<feature type="disulfide bond" evidence="1">
    <location>
        <begin position="176"/>
        <end position="182"/>
    </location>
</feature>
<feature type="splice variant" id="VSP_036530" description="In isoform Secreted glycoprotein G." evidence="1">
    <location>
        <begin position="1"/>
        <end position="47"/>
    </location>
</feature>
<feature type="strand" evidence="6">
    <location>
        <begin position="168"/>
        <end position="170"/>
    </location>
</feature>
<feature type="helix" evidence="6">
    <location>
        <begin position="173"/>
        <end position="175"/>
    </location>
</feature>
<feature type="helix" evidence="6">
    <location>
        <begin position="180"/>
        <end position="185"/>
    </location>
</feature>
<keyword id="KW-0002">3D-structure</keyword>
<keyword id="KW-0024">Alternative initiation</keyword>
<keyword id="KW-1015">Disulfide bond</keyword>
<keyword id="KW-0325">Glycoprotein</keyword>
<keyword id="KW-1032">Host cell membrane</keyword>
<keyword id="KW-1043">Host membrane</keyword>
<keyword id="KW-0945">Host-virus interaction</keyword>
<keyword id="KW-0472">Membrane</keyword>
<keyword id="KW-0964">Secreted</keyword>
<keyword id="KW-0812">Transmembrane</keyword>
<keyword id="KW-1133">Transmembrane helix</keyword>
<keyword id="KW-1161">Viral attachment to host cell</keyword>
<keyword id="KW-0899">Viral immunoevasion</keyword>
<keyword id="KW-0946">Virion</keyword>
<keyword id="KW-1160">Virus entry into host cell</keyword>
<dbReference type="PIR" id="JQ1208">
    <property type="entry name" value="JQ1208"/>
</dbReference>
<dbReference type="PDB" id="6BLH">
    <property type="method" value="X-ray"/>
    <property type="resolution" value="2.00 A"/>
    <property type="chains" value="G=153-197"/>
</dbReference>
<dbReference type="PDB" id="6BLI">
    <property type="method" value="X-ray"/>
    <property type="resolution" value="2.12 A"/>
    <property type="chains" value="C/F/I/L=153-197"/>
</dbReference>
<dbReference type="PDBsum" id="6BLH"/>
<dbReference type="PDBsum" id="6BLI"/>
<dbReference type="SMR" id="P27025"/>
<dbReference type="GlyCosmos" id="P27025">
    <property type="glycosylation" value="31 sites, No reported glycans"/>
</dbReference>
<dbReference type="ABCD" id="P27025">
    <property type="antibodies" value="2 sequenced antibodies"/>
</dbReference>
<dbReference type="GO" id="GO:0005576">
    <property type="term" value="C:extracellular region"/>
    <property type="evidence" value="ECO:0007669"/>
    <property type="project" value="UniProtKB-SubCell"/>
</dbReference>
<dbReference type="GO" id="GO:0020002">
    <property type="term" value="C:host cell plasma membrane"/>
    <property type="evidence" value="ECO:0007669"/>
    <property type="project" value="UniProtKB-SubCell"/>
</dbReference>
<dbReference type="GO" id="GO:0016020">
    <property type="term" value="C:membrane"/>
    <property type="evidence" value="ECO:0007669"/>
    <property type="project" value="UniProtKB-KW"/>
</dbReference>
<dbReference type="GO" id="GO:0055036">
    <property type="term" value="C:virion membrane"/>
    <property type="evidence" value="ECO:0007669"/>
    <property type="project" value="UniProtKB-SubCell"/>
</dbReference>
<dbReference type="GO" id="GO:0046718">
    <property type="term" value="P:symbiont entry into host cell"/>
    <property type="evidence" value="ECO:0007669"/>
    <property type="project" value="UniProtKB-KW"/>
</dbReference>
<dbReference type="GO" id="GO:0019062">
    <property type="term" value="P:virion attachment to host cell"/>
    <property type="evidence" value="ECO:0007669"/>
    <property type="project" value="UniProtKB-KW"/>
</dbReference>
<dbReference type="InterPro" id="IPR000925">
    <property type="entry name" value="G_prot"/>
</dbReference>
<dbReference type="Pfam" id="PF00802">
    <property type="entry name" value="Glycoprotein_G"/>
    <property type="match status" value="1"/>
</dbReference>
<sequence length="297" mass="32708">MSKTKDQRTAKTLERTWDTLNHLLFISSCLYKLNLKSIAQITLSILAMIISTSLIIAAIIFIASANHKVTLTTAIIQDATSQIKNTTPTYLTQNPQLGISFSNLSETTSQPTTTPAPTTPSAESTPQSTTVKTKNTTTTQIQPSKPTTKQRQNKPPNKPNNDFHFEVFNFVPCSICSNNPTCWAICKRIPNKKPGKKTTTKPTKKPTIKTTKKDLKPQTTKPKEVLTTKPTEKPTINTTRTNIRTTLLTTNTTGNPEYTSQKETLHSTSPEGNPSPSQVYTTSEYPSQPPSPSNTTN</sequence>
<proteinExistence type="evidence at protein level"/>
<accession>P27025</accession>
<comment type="function">
    <molecule>Isoform Membrane-bound glycoprotein G</molecule>
    <text evidence="1">Attaches the virion to the host cell membrane by interacting with heparan sulfate, initiating the infection. Interacts with host CX3CR1, the receptor for the CX3C chemokine fractalkine, to modulate the immune response and facilitate infection. Unlike the other paramyxovirus attachment proteins, lacks both neuraminidase and hemagglutinating activities.</text>
</comment>
<comment type="function">
    <molecule>Isoform Secreted glycoprotein G</molecule>
    <text evidence="1">Helps the virus escape antibody-dependent restriction of replication by acting as an antigen decoy and by modulating the activity of leukocytes bearing Fc-gamma receptors.</text>
</comment>
<comment type="subunit">
    <molecule>Isoform Membrane-bound glycoprotein G</molecule>
    <text evidence="1">Homooligomer. Interacts (via N-terminus) with protein M. Part of a complex composed of F1, F2 and G glycoproteins. Interacts with protein SH. Interacts with host heparate sulfate; this interaction probably participates in the viral attachment to the host cell. Interacts with host CX3CR1; this interaction plays an important role in viral entry. Interacts with the host lectins CD209/DC-SIGN and CD209L/L-SIGN on dendritic cells; these interactions stimulate the phosphorylation of MAPK3/ERK1 and MAPK1/ERK2, which inhibits dendritic cell activation and could participate in the limited immunity against RSV reinfection.</text>
</comment>
<comment type="subcellular location">
    <molecule>Isoform Membrane-bound glycoprotein G</molecule>
    <subcellularLocation>
        <location evidence="1">Virion membrane</location>
        <topology evidence="1">Single-pass type II membrane protein</topology>
    </subcellularLocation>
    <subcellularLocation>
        <location evidence="1">Host cell membrane</location>
        <topology evidence="1">Single-pass type II membrane protein</topology>
    </subcellularLocation>
</comment>
<comment type="subcellular location">
    <molecule>Isoform Secreted glycoprotein G</molecule>
    <subcellularLocation>
        <location evidence="2">Secreted</location>
    </subcellularLocation>
    <text evidence="2">The protein is shed from infected cells before the appearance of progeny virus. The initiation at the downstream methionine removes a portion of the transmembrane domain. The remaining hydrophobic portion of the sG protein is essential for translocating it into the lumen of the ER during translation and would likely maintain its membrane association until a proteolytic event releases the mature sG protein into the medium.</text>
</comment>
<comment type="alternative products">
    <event type="alternative initiation"/>
    <isoform>
        <id>P27025-1</id>
        <name>Membrane-bound glycoprotein G</name>
        <sequence type="displayed"/>
    </isoform>
    <isoform>
        <id>P27025-2</id>
        <name>Secreted glycoprotein G</name>
        <sequence type="described" ref="VSP_036530"/>
    </isoform>
</comment>
<comment type="domain">
    <molecule>Isoform Membrane-bound glycoprotein G</molecule>
    <text evidence="1">Contains a linear heparin binding domain essential for virus attachment to the host.</text>
</comment>
<comment type="PTM">
    <molecule>Isoform Secreted glycoprotein G</molecule>
    <text evidence="2">Cleaved to give rise to the mature sG protein which lacks the transmembrane domain.</text>
</comment>
<comment type="PTM">
    <molecule>Isoform Membrane-bound glycoprotein G</molecule>
    <text evidence="1">N- and O-glycosylated. May carry 30-40 separate O-linked carbohydrate chains distributed among the 91 serine and threonine residues.</text>
</comment>
<comment type="PTM">
    <molecule>Isoform Membrane-bound glycoprotein G</molecule>
    <text evidence="1">Palmitoylated.</text>
</comment>
<comment type="similarity">
    <text evidence="5">Belongs to the pneumoviruses glycoprotein G family.</text>
</comment>